<proteinExistence type="inferred from homology"/>
<sequence>MYDIKKWRHIFKLDPAKHISDDDLDAICMSQTDAIMIGGTDDVTEDNVIHLMSRVRRYPLPLVLEISNIESVMPGFDFYFVPTVLNSTDVVFHNGTLLEALKTYGHSIDFEEVIFEGYVVCNADSKVAKHTKANTDLTTEDLEAYAQMVNHMYRLPVMYIEYSGIYGDVSKVQAVSEHLTETQLFYGGGISSEQQATEMAAIADTIIVGDIIYKDIKKALKTVKIKESSK</sequence>
<comment type="function">
    <text evidence="1">Prenyltransferase that catalyzes in vivo the transfer of the heptaprenyl moiety of heptaprenyl pyrophosphate (HepPP; 35 carbon atoms) to the C3 hydroxyl of sn-glycerol-1-phosphate (G1P), producing heptaprenylglyceryl phosphate (HepGP). This reaction is an ether-bond-formation step in the biosynthesis of archaea-type G1P-based membrane lipids found in Bacillales.</text>
</comment>
<comment type="catalytic activity">
    <reaction evidence="1">
        <text>sn-glycerol 1-phosphate + all-trans-heptaprenyl diphosphate = 3-heptaprenyl-sn-glycero-1-phosphate + diphosphate</text>
        <dbReference type="Rhea" id="RHEA:33495"/>
        <dbReference type="ChEBI" id="CHEBI:33019"/>
        <dbReference type="ChEBI" id="CHEBI:57685"/>
        <dbReference type="ChEBI" id="CHEBI:58206"/>
        <dbReference type="ChEBI" id="CHEBI:64781"/>
        <dbReference type="EC" id="2.5.1.n9"/>
    </reaction>
</comment>
<comment type="cofactor">
    <cofactor evidence="1">
        <name>Mg(2+)</name>
        <dbReference type="ChEBI" id="CHEBI:18420"/>
    </cofactor>
</comment>
<comment type="pathway">
    <text evidence="1">Membrane lipid metabolism; glycerophospholipid metabolism.</text>
</comment>
<comment type="subunit">
    <text evidence="1">Homodimer.</text>
</comment>
<comment type="similarity">
    <text evidence="1">Belongs to the GGGP/HepGP synthase family. Group I subfamily.</text>
</comment>
<gene>
    <name evidence="1" type="primary">pcrB</name>
    <name type="ordered locus">SAS1829</name>
</gene>
<organism>
    <name type="scientific">Staphylococcus aureus (strain MSSA476)</name>
    <dbReference type="NCBI Taxonomy" id="282459"/>
    <lineage>
        <taxon>Bacteria</taxon>
        <taxon>Bacillati</taxon>
        <taxon>Bacillota</taxon>
        <taxon>Bacilli</taxon>
        <taxon>Bacillales</taxon>
        <taxon>Staphylococcaceae</taxon>
        <taxon>Staphylococcus</taxon>
    </lineage>
</organism>
<keyword id="KW-0444">Lipid biosynthesis</keyword>
<keyword id="KW-0443">Lipid metabolism</keyword>
<keyword id="KW-0460">Magnesium</keyword>
<keyword id="KW-0479">Metal-binding</keyword>
<keyword id="KW-0594">Phospholipid biosynthesis</keyword>
<keyword id="KW-1208">Phospholipid metabolism</keyword>
<keyword id="KW-0808">Transferase</keyword>
<dbReference type="EC" id="2.5.1.n9" evidence="1"/>
<dbReference type="EMBL" id="BX571857">
    <property type="protein sequence ID" value="CAG43634.1"/>
    <property type="molecule type" value="Genomic_DNA"/>
</dbReference>
<dbReference type="RefSeq" id="WP_000272070.1">
    <property type="nucleotide sequence ID" value="NC_002953.3"/>
</dbReference>
<dbReference type="SMR" id="Q6G827"/>
<dbReference type="KEGG" id="sas:SAS1829"/>
<dbReference type="HOGENOM" id="CLU_095211_0_0_9"/>
<dbReference type="UniPathway" id="UPA00940"/>
<dbReference type="GO" id="GO:0120536">
    <property type="term" value="F:heptaprenylglyceryl phosphate synthase activity"/>
    <property type="evidence" value="ECO:0007669"/>
    <property type="project" value="RHEA"/>
</dbReference>
<dbReference type="GO" id="GO:0000287">
    <property type="term" value="F:magnesium ion binding"/>
    <property type="evidence" value="ECO:0007669"/>
    <property type="project" value="UniProtKB-UniRule"/>
</dbReference>
<dbReference type="GO" id="GO:0046474">
    <property type="term" value="P:glycerophospholipid biosynthetic process"/>
    <property type="evidence" value="ECO:0007669"/>
    <property type="project" value="UniProtKB-UniRule"/>
</dbReference>
<dbReference type="CDD" id="cd02812">
    <property type="entry name" value="PcrB_like"/>
    <property type="match status" value="1"/>
</dbReference>
<dbReference type="FunFam" id="3.20.20.390:FF:000001">
    <property type="entry name" value="Heptaprenylglyceryl phosphate synthase"/>
    <property type="match status" value="1"/>
</dbReference>
<dbReference type="Gene3D" id="3.20.20.390">
    <property type="entry name" value="FMN-linked oxidoreductases"/>
    <property type="match status" value="1"/>
</dbReference>
<dbReference type="HAMAP" id="MF_00112">
    <property type="entry name" value="GGGP_HepGP_synthase"/>
    <property type="match status" value="1"/>
</dbReference>
<dbReference type="InterPro" id="IPR039074">
    <property type="entry name" value="GGGP/HepGP_synthase_I"/>
</dbReference>
<dbReference type="InterPro" id="IPR038597">
    <property type="entry name" value="GGGP/HepGP_synthase_sf"/>
</dbReference>
<dbReference type="InterPro" id="IPR008205">
    <property type="entry name" value="GGGP_HepGP_synthase"/>
</dbReference>
<dbReference type="NCBIfam" id="TIGR01768">
    <property type="entry name" value="GGGP-family"/>
    <property type="match status" value="1"/>
</dbReference>
<dbReference type="NCBIfam" id="NF003197">
    <property type="entry name" value="PRK04169.1-1"/>
    <property type="match status" value="1"/>
</dbReference>
<dbReference type="NCBIfam" id="NF003199">
    <property type="entry name" value="PRK04169.1-3"/>
    <property type="match status" value="1"/>
</dbReference>
<dbReference type="NCBIfam" id="NF003200">
    <property type="entry name" value="PRK04169.1-4"/>
    <property type="match status" value="1"/>
</dbReference>
<dbReference type="PANTHER" id="PTHR40029">
    <property type="match status" value="1"/>
</dbReference>
<dbReference type="PANTHER" id="PTHR40029:SF2">
    <property type="entry name" value="HEPTAPRENYLGLYCERYL PHOSPHATE SYNTHASE"/>
    <property type="match status" value="1"/>
</dbReference>
<dbReference type="Pfam" id="PF01884">
    <property type="entry name" value="PcrB"/>
    <property type="match status" value="1"/>
</dbReference>
<dbReference type="SUPFAM" id="SSF51395">
    <property type="entry name" value="FMN-linked oxidoreductases"/>
    <property type="match status" value="1"/>
</dbReference>
<name>PCRB_STAAS</name>
<protein>
    <recommendedName>
        <fullName evidence="1">Heptaprenylglyceryl phosphate synthase</fullName>
        <shortName evidence="1">HepGP synthase</shortName>
        <ecNumber evidence="1">2.5.1.n9</ecNumber>
    </recommendedName>
    <alternativeName>
        <fullName evidence="1">Glycerol-1-phosphate heptaprenyltransferase</fullName>
    </alternativeName>
</protein>
<accession>Q6G827</accession>
<reference key="1">
    <citation type="journal article" date="2004" name="Proc. Natl. Acad. Sci. U.S.A.">
        <title>Complete genomes of two clinical Staphylococcus aureus strains: evidence for the rapid evolution of virulence and drug resistance.</title>
        <authorList>
            <person name="Holden M.T.G."/>
            <person name="Feil E.J."/>
            <person name="Lindsay J.A."/>
            <person name="Peacock S.J."/>
            <person name="Day N.P.J."/>
            <person name="Enright M.C."/>
            <person name="Foster T.J."/>
            <person name="Moore C.E."/>
            <person name="Hurst L."/>
            <person name="Atkin R."/>
            <person name="Barron A."/>
            <person name="Bason N."/>
            <person name="Bentley S.D."/>
            <person name="Chillingworth C."/>
            <person name="Chillingworth T."/>
            <person name="Churcher C."/>
            <person name="Clark L."/>
            <person name="Corton C."/>
            <person name="Cronin A."/>
            <person name="Doggett J."/>
            <person name="Dowd L."/>
            <person name="Feltwell T."/>
            <person name="Hance Z."/>
            <person name="Harris B."/>
            <person name="Hauser H."/>
            <person name="Holroyd S."/>
            <person name="Jagels K."/>
            <person name="James K.D."/>
            <person name="Lennard N."/>
            <person name="Line A."/>
            <person name="Mayes R."/>
            <person name="Moule S."/>
            <person name="Mungall K."/>
            <person name="Ormond D."/>
            <person name="Quail M.A."/>
            <person name="Rabbinowitsch E."/>
            <person name="Rutherford K.M."/>
            <person name="Sanders M."/>
            <person name="Sharp S."/>
            <person name="Simmonds M."/>
            <person name="Stevens K."/>
            <person name="Whitehead S."/>
            <person name="Barrell B.G."/>
            <person name="Spratt B.G."/>
            <person name="Parkhill J."/>
        </authorList>
    </citation>
    <scope>NUCLEOTIDE SEQUENCE [LARGE SCALE GENOMIC DNA]</scope>
    <source>
        <strain>MSSA476</strain>
    </source>
</reference>
<feature type="chain" id="PRO_0000138721" description="Heptaprenylglyceryl phosphate synthase">
    <location>
        <begin position="1"/>
        <end position="230"/>
    </location>
</feature>
<feature type="binding site" evidence="1">
    <location>
        <position position="12"/>
    </location>
    <ligand>
        <name>sn-glycerol 1-phosphate</name>
        <dbReference type="ChEBI" id="CHEBI:57685"/>
    </ligand>
</feature>
<feature type="binding site" evidence="1">
    <location>
        <position position="14"/>
    </location>
    <ligand>
        <name>Mg(2+)</name>
        <dbReference type="ChEBI" id="CHEBI:18420"/>
    </ligand>
</feature>
<feature type="binding site" evidence="1">
    <location>
        <position position="40"/>
    </location>
    <ligand>
        <name>Mg(2+)</name>
        <dbReference type="ChEBI" id="CHEBI:18420"/>
    </ligand>
</feature>
<feature type="binding site" evidence="1">
    <location>
        <begin position="159"/>
        <end position="164"/>
    </location>
    <ligand>
        <name>sn-glycerol 1-phosphate</name>
        <dbReference type="ChEBI" id="CHEBI:57685"/>
    </ligand>
</feature>
<feature type="binding site" evidence="1">
    <location>
        <position position="189"/>
    </location>
    <ligand>
        <name>sn-glycerol 1-phosphate</name>
        <dbReference type="ChEBI" id="CHEBI:57685"/>
    </ligand>
</feature>
<feature type="binding site" evidence="1">
    <location>
        <begin position="209"/>
        <end position="210"/>
    </location>
    <ligand>
        <name>sn-glycerol 1-phosphate</name>
        <dbReference type="ChEBI" id="CHEBI:57685"/>
    </ligand>
</feature>
<evidence type="ECO:0000255" key="1">
    <source>
        <dbReference type="HAMAP-Rule" id="MF_00112"/>
    </source>
</evidence>